<dbReference type="EC" id="7.2.1.1" evidence="1"/>
<dbReference type="EMBL" id="CP000644">
    <property type="protein sequence ID" value="ABO91189.1"/>
    <property type="molecule type" value="Genomic_DNA"/>
</dbReference>
<dbReference type="RefSeq" id="WP_005311984.1">
    <property type="nucleotide sequence ID" value="NC_009348.1"/>
</dbReference>
<dbReference type="SMR" id="A4SQL7"/>
<dbReference type="STRING" id="29491.GCA_000820065_03576"/>
<dbReference type="KEGG" id="asa:ASA_3196"/>
<dbReference type="eggNOG" id="COG1347">
    <property type="taxonomic scope" value="Bacteria"/>
</dbReference>
<dbReference type="HOGENOM" id="CLU_046659_1_1_6"/>
<dbReference type="Proteomes" id="UP000000225">
    <property type="component" value="Chromosome"/>
</dbReference>
<dbReference type="GO" id="GO:0005886">
    <property type="term" value="C:plasma membrane"/>
    <property type="evidence" value="ECO:0007669"/>
    <property type="project" value="UniProtKB-SubCell"/>
</dbReference>
<dbReference type="GO" id="GO:0016655">
    <property type="term" value="F:oxidoreductase activity, acting on NAD(P)H, quinone or similar compound as acceptor"/>
    <property type="evidence" value="ECO:0007669"/>
    <property type="project" value="UniProtKB-UniRule"/>
</dbReference>
<dbReference type="GO" id="GO:0006814">
    <property type="term" value="P:sodium ion transport"/>
    <property type="evidence" value="ECO:0007669"/>
    <property type="project" value="UniProtKB-UniRule"/>
</dbReference>
<dbReference type="HAMAP" id="MF_00428">
    <property type="entry name" value="NqrD"/>
    <property type="match status" value="1"/>
</dbReference>
<dbReference type="InterPro" id="IPR011292">
    <property type="entry name" value="NqrD"/>
</dbReference>
<dbReference type="InterPro" id="IPR003667">
    <property type="entry name" value="NqrDE/RnfAE"/>
</dbReference>
<dbReference type="NCBIfam" id="TIGR01939">
    <property type="entry name" value="nqrD"/>
    <property type="match status" value="1"/>
</dbReference>
<dbReference type="NCBIfam" id="NF006777">
    <property type="entry name" value="PRK09292.1"/>
    <property type="match status" value="1"/>
</dbReference>
<dbReference type="NCBIfam" id="NF009070">
    <property type="entry name" value="PRK12405.1"/>
    <property type="match status" value="1"/>
</dbReference>
<dbReference type="PANTHER" id="PTHR30586">
    <property type="entry name" value="ELECTRON TRANSPORT COMPLEX PROTEIN RNFE"/>
    <property type="match status" value="1"/>
</dbReference>
<dbReference type="PANTHER" id="PTHR30586:SF1">
    <property type="entry name" value="NA(+)-TRANSLOCATING NADH-QUINONE REDUCTASE SUBUNIT D"/>
    <property type="match status" value="1"/>
</dbReference>
<dbReference type="Pfam" id="PF02508">
    <property type="entry name" value="Rnf-Nqr"/>
    <property type="match status" value="1"/>
</dbReference>
<dbReference type="PIRSF" id="PIRSF006102">
    <property type="entry name" value="NQR_DE"/>
    <property type="match status" value="1"/>
</dbReference>
<protein>
    <recommendedName>
        <fullName evidence="1">Na(+)-translocating NADH-quinone reductase subunit D</fullName>
        <shortName evidence="1">Na(+)-NQR subunit D</shortName>
        <shortName evidence="1">Na(+)-translocating NQR subunit D</shortName>
        <ecNumber evidence="1">7.2.1.1</ecNumber>
    </recommendedName>
    <alternativeName>
        <fullName evidence="1">NQR complex subunit D</fullName>
    </alternativeName>
    <alternativeName>
        <fullName evidence="1">NQR-1 subunit D</fullName>
    </alternativeName>
</protein>
<keyword id="KW-0997">Cell inner membrane</keyword>
<keyword id="KW-1003">Cell membrane</keyword>
<keyword id="KW-0406">Ion transport</keyword>
<keyword id="KW-0472">Membrane</keyword>
<keyword id="KW-0520">NAD</keyword>
<keyword id="KW-0915">Sodium</keyword>
<keyword id="KW-0739">Sodium transport</keyword>
<keyword id="KW-1278">Translocase</keyword>
<keyword id="KW-0812">Transmembrane</keyword>
<keyword id="KW-1133">Transmembrane helix</keyword>
<keyword id="KW-0813">Transport</keyword>
<keyword id="KW-0830">Ubiquinone</keyword>
<accession>A4SQL7</accession>
<reference key="1">
    <citation type="journal article" date="2008" name="BMC Genomics">
        <title>The genome of Aeromonas salmonicida subsp. salmonicida A449: insights into the evolution of a fish pathogen.</title>
        <authorList>
            <person name="Reith M.E."/>
            <person name="Singh R.K."/>
            <person name="Curtis B."/>
            <person name="Boyd J.M."/>
            <person name="Bouevitch A."/>
            <person name="Kimball J."/>
            <person name="Munholland J."/>
            <person name="Murphy C."/>
            <person name="Sarty D."/>
            <person name="Williams J."/>
            <person name="Nash J.H."/>
            <person name="Johnson S.C."/>
            <person name="Brown L.L."/>
        </authorList>
    </citation>
    <scope>NUCLEOTIDE SEQUENCE [LARGE SCALE GENOMIC DNA]</scope>
    <source>
        <strain>A449</strain>
    </source>
</reference>
<evidence type="ECO:0000255" key="1">
    <source>
        <dbReference type="HAMAP-Rule" id="MF_00428"/>
    </source>
</evidence>
<name>NQRD_AERS4</name>
<gene>
    <name evidence="1" type="primary">nqrD</name>
    <name type="ordered locus">ASA_3196</name>
</gene>
<comment type="function">
    <text evidence="1">NQR complex catalyzes the reduction of ubiquinone-1 to ubiquinol by two successive reactions, coupled with the transport of Na(+) ions from the cytoplasm to the periplasm. NqrA to NqrE are probably involved in the second step, the conversion of ubisemiquinone to ubiquinol.</text>
</comment>
<comment type="catalytic activity">
    <reaction evidence="1">
        <text>a ubiquinone + n Na(+)(in) + NADH + H(+) = a ubiquinol + n Na(+)(out) + NAD(+)</text>
        <dbReference type="Rhea" id="RHEA:47748"/>
        <dbReference type="Rhea" id="RHEA-COMP:9565"/>
        <dbReference type="Rhea" id="RHEA-COMP:9566"/>
        <dbReference type="ChEBI" id="CHEBI:15378"/>
        <dbReference type="ChEBI" id="CHEBI:16389"/>
        <dbReference type="ChEBI" id="CHEBI:17976"/>
        <dbReference type="ChEBI" id="CHEBI:29101"/>
        <dbReference type="ChEBI" id="CHEBI:57540"/>
        <dbReference type="ChEBI" id="CHEBI:57945"/>
        <dbReference type="EC" id="7.2.1.1"/>
    </reaction>
</comment>
<comment type="subunit">
    <text evidence="1">Composed of six subunits; NqrA, NqrB, NqrC, NqrD, NqrE and NqrF.</text>
</comment>
<comment type="subcellular location">
    <subcellularLocation>
        <location evidence="1">Cell inner membrane</location>
        <topology evidence="1">Multi-pass membrane protein</topology>
    </subcellularLocation>
</comment>
<comment type="similarity">
    <text evidence="1">Belongs to the NqrDE/RnfAE family.</text>
</comment>
<proteinExistence type="inferred from homology"/>
<sequence>MADKSEMKKLLLTPVLGNNPIALQVLGVCSALAVTSQMKTAFVMTLAVTAVTAFSNLFISLIRNQIPNSVRIIAQMAVIASLVIVVDQVLKAYAYEISKQLSVFVGLIITNCIVMGRAEAYAMKSAPLPSFLDGIGNGLGYGAVLLTVATVREILGSGTWFGIELLPLVNNGGWYVPNGLLLLPPSAFFIIGLIIWGVRTRDPKQVEAKD</sequence>
<organism>
    <name type="scientific">Aeromonas salmonicida (strain A449)</name>
    <dbReference type="NCBI Taxonomy" id="382245"/>
    <lineage>
        <taxon>Bacteria</taxon>
        <taxon>Pseudomonadati</taxon>
        <taxon>Pseudomonadota</taxon>
        <taxon>Gammaproteobacteria</taxon>
        <taxon>Aeromonadales</taxon>
        <taxon>Aeromonadaceae</taxon>
        <taxon>Aeromonas</taxon>
    </lineage>
</organism>
<feature type="chain" id="PRO_1000060148" description="Na(+)-translocating NADH-quinone reductase subunit D">
    <location>
        <begin position="1"/>
        <end position="210"/>
    </location>
</feature>
<feature type="transmembrane region" description="Helical" evidence="1">
    <location>
        <begin position="42"/>
        <end position="62"/>
    </location>
</feature>
<feature type="transmembrane region" description="Helical" evidence="1">
    <location>
        <begin position="72"/>
        <end position="92"/>
    </location>
</feature>
<feature type="transmembrane region" description="Helical" evidence="1">
    <location>
        <begin position="103"/>
        <end position="123"/>
    </location>
</feature>
<feature type="transmembrane region" description="Helical" evidence="1">
    <location>
        <begin position="131"/>
        <end position="151"/>
    </location>
</feature>
<feature type="transmembrane region" description="Helical" evidence="1">
    <location>
        <begin position="178"/>
        <end position="198"/>
    </location>
</feature>